<dbReference type="EMBL" id="AJ544827">
    <property type="protein sequence ID" value="CAD67759.1"/>
    <property type="molecule type" value="mRNA"/>
</dbReference>
<dbReference type="RefSeq" id="NP_878287.1">
    <property type="nucleotide sequence ID" value="NM_182867.1"/>
</dbReference>
<dbReference type="SMR" id="Q800G5"/>
<dbReference type="FunCoup" id="Q800G5">
    <property type="interactions" value="4"/>
</dbReference>
<dbReference type="STRING" id="7955.ENSDARP00000118741"/>
<dbReference type="PaxDb" id="7955-ENSDARP00000091708"/>
<dbReference type="Ensembl" id="ENSDART00000142227">
    <property type="protein sequence ID" value="ENSDARP00000118741"/>
    <property type="gene ID" value="ENSDARG00000014427"/>
</dbReference>
<dbReference type="GeneID" id="337663"/>
<dbReference type="KEGG" id="dre:337663"/>
<dbReference type="AGR" id="ZFIN:ZDB-GENE-030131-9609"/>
<dbReference type="CTD" id="337663"/>
<dbReference type="ZFIN" id="ZDB-GENE-030131-9609">
    <property type="gene designation" value="mxe"/>
</dbReference>
<dbReference type="eggNOG" id="KOG0446">
    <property type="taxonomic scope" value="Eukaryota"/>
</dbReference>
<dbReference type="HOGENOM" id="CLU_008964_8_0_1"/>
<dbReference type="InParanoid" id="Q800G5"/>
<dbReference type="OMA" id="MKTWEAI"/>
<dbReference type="OrthoDB" id="5061070at2759"/>
<dbReference type="PhylomeDB" id="Q800G5"/>
<dbReference type="TreeFam" id="TF331484"/>
<dbReference type="PRO" id="PR:Q800G5"/>
<dbReference type="Proteomes" id="UP000000437">
    <property type="component" value="Chromosome 9"/>
</dbReference>
<dbReference type="Bgee" id="ENSDARG00000014427">
    <property type="expression patterns" value="Expressed in spleen and 15 other cell types or tissues"/>
</dbReference>
<dbReference type="GO" id="GO:0005737">
    <property type="term" value="C:cytoplasm"/>
    <property type="evidence" value="ECO:0000318"/>
    <property type="project" value="GO_Central"/>
</dbReference>
<dbReference type="GO" id="GO:0005874">
    <property type="term" value="C:microtubule"/>
    <property type="evidence" value="ECO:0000318"/>
    <property type="project" value="GO_Central"/>
</dbReference>
<dbReference type="GO" id="GO:0005634">
    <property type="term" value="C:nucleus"/>
    <property type="evidence" value="ECO:0000318"/>
    <property type="project" value="GO_Central"/>
</dbReference>
<dbReference type="GO" id="GO:0005886">
    <property type="term" value="C:plasma membrane"/>
    <property type="evidence" value="ECO:0000318"/>
    <property type="project" value="GO_Central"/>
</dbReference>
<dbReference type="GO" id="GO:0098793">
    <property type="term" value="C:presynapse"/>
    <property type="evidence" value="ECO:0007669"/>
    <property type="project" value="GOC"/>
</dbReference>
<dbReference type="GO" id="GO:0045202">
    <property type="term" value="C:synapse"/>
    <property type="evidence" value="ECO:0000318"/>
    <property type="project" value="GO_Central"/>
</dbReference>
<dbReference type="GO" id="GO:0005525">
    <property type="term" value="F:GTP binding"/>
    <property type="evidence" value="ECO:0007669"/>
    <property type="project" value="UniProtKB-KW"/>
</dbReference>
<dbReference type="GO" id="GO:0003924">
    <property type="term" value="F:GTPase activity"/>
    <property type="evidence" value="ECO:0000318"/>
    <property type="project" value="GO_Central"/>
</dbReference>
<dbReference type="GO" id="GO:0008017">
    <property type="term" value="F:microtubule binding"/>
    <property type="evidence" value="ECO:0000318"/>
    <property type="project" value="GO_Central"/>
</dbReference>
<dbReference type="GO" id="GO:0051607">
    <property type="term" value="P:defense response to virus"/>
    <property type="evidence" value="ECO:0000318"/>
    <property type="project" value="GO_Central"/>
</dbReference>
<dbReference type="GO" id="GO:0031623">
    <property type="term" value="P:receptor internalization"/>
    <property type="evidence" value="ECO:0000318"/>
    <property type="project" value="GO_Central"/>
</dbReference>
<dbReference type="GO" id="GO:0009615">
    <property type="term" value="P:response to virus"/>
    <property type="evidence" value="ECO:0000314"/>
    <property type="project" value="ZFIN"/>
</dbReference>
<dbReference type="GO" id="GO:0016185">
    <property type="term" value="P:synaptic vesicle budding from presynaptic endocytic zone membrane"/>
    <property type="evidence" value="ECO:0000318"/>
    <property type="project" value="GO_Central"/>
</dbReference>
<dbReference type="CDD" id="cd08771">
    <property type="entry name" value="DLP_1"/>
    <property type="match status" value="1"/>
</dbReference>
<dbReference type="FunFam" id="1.20.120.1240:FF:000007">
    <property type="entry name" value="Interferon-induced GTP-binding protein Mx1"/>
    <property type="match status" value="1"/>
</dbReference>
<dbReference type="FunFam" id="3.40.50.300:FF:000621">
    <property type="entry name" value="Interferon-induced GTP-binding protein Mx1"/>
    <property type="match status" value="1"/>
</dbReference>
<dbReference type="Gene3D" id="1.20.120.1240">
    <property type="entry name" value="Dynamin, middle domain"/>
    <property type="match status" value="1"/>
</dbReference>
<dbReference type="Gene3D" id="3.40.50.300">
    <property type="entry name" value="P-loop containing nucleotide triphosphate hydrolases"/>
    <property type="match status" value="1"/>
</dbReference>
<dbReference type="InterPro" id="IPR022812">
    <property type="entry name" value="Dynamin"/>
</dbReference>
<dbReference type="InterPro" id="IPR001401">
    <property type="entry name" value="Dynamin_GTPase"/>
</dbReference>
<dbReference type="InterPro" id="IPR019762">
    <property type="entry name" value="Dynamin_GTPase_CS"/>
</dbReference>
<dbReference type="InterPro" id="IPR045063">
    <property type="entry name" value="Dynamin_N"/>
</dbReference>
<dbReference type="InterPro" id="IPR000375">
    <property type="entry name" value="Dynamin_stalk"/>
</dbReference>
<dbReference type="InterPro" id="IPR030381">
    <property type="entry name" value="G_DYNAMIN_dom"/>
</dbReference>
<dbReference type="InterPro" id="IPR003130">
    <property type="entry name" value="GED"/>
</dbReference>
<dbReference type="InterPro" id="IPR020850">
    <property type="entry name" value="GED_dom"/>
</dbReference>
<dbReference type="InterPro" id="IPR027417">
    <property type="entry name" value="P-loop_NTPase"/>
</dbReference>
<dbReference type="PANTHER" id="PTHR11566">
    <property type="entry name" value="DYNAMIN"/>
    <property type="match status" value="1"/>
</dbReference>
<dbReference type="PANTHER" id="PTHR11566:SF199">
    <property type="entry name" value="INTERFERON-INDUCED GTP-BINDING PROTEIN MXC-RELATED"/>
    <property type="match status" value="1"/>
</dbReference>
<dbReference type="Pfam" id="PF01031">
    <property type="entry name" value="Dynamin_M"/>
    <property type="match status" value="1"/>
</dbReference>
<dbReference type="Pfam" id="PF00350">
    <property type="entry name" value="Dynamin_N"/>
    <property type="match status" value="1"/>
</dbReference>
<dbReference type="Pfam" id="PF02212">
    <property type="entry name" value="GED"/>
    <property type="match status" value="1"/>
</dbReference>
<dbReference type="PRINTS" id="PR00195">
    <property type="entry name" value="DYNAMIN"/>
</dbReference>
<dbReference type="SMART" id="SM00053">
    <property type="entry name" value="DYNc"/>
    <property type="match status" value="1"/>
</dbReference>
<dbReference type="SMART" id="SM00302">
    <property type="entry name" value="GED"/>
    <property type="match status" value="1"/>
</dbReference>
<dbReference type="SUPFAM" id="SSF52540">
    <property type="entry name" value="P-loop containing nucleoside triphosphate hydrolases"/>
    <property type="match status" value="1"/>
</dbReference>
<dbReference type="PROSITE" id="PS00410">
    <property type="entry name" value="G_DYNAMIN_1"/>
    <property type="match status" value="1"/>
</dbReference>
<dbReference type="PROSITE" id="PS51718">
    <property type="entry name" value="G_DYNAMIN_2"/>
    <property type="match status" value="1"/>
</dbReference>
<dbReference type="PROSITE" id="PS51388">
    <property type="entry name" value="GED"/>
    <property type="match status" value="1"/>
</dbReference>
<sequence length="625" mass="70395">MSPSGSTKGESSGLNQHYEEKVRPCIDLVDSLRALGVEKDLNLPAIAVIGDQSSGKSSVLEALSGVALPRGTGIVTRCPLVLKLKKITKDKSWHGLLTYNDKIRELKDPAKIEKAVLNAQTALAGIGEGISHEMITLEIQSCDVPDLTLIDLPGIARVATGNQPEDIEKQIKSLIEKFIKRQETISLVVVPANIDIATTEALKMASTVDPTGQRTLGILTKPDLVDRGMEDTVVRTVNNEVIPLKKGYMIVKCRGQQDINDKLGLVEALEKERRFFDENVHFRSLLEDRKATIPLLAERLTKELVEHIAKNLPQLQNQLEMKLEKTSADLRGLGDGVPLDKNEKSNFLIMKIRQFNDVLERVQMAEEDVEKPNTRVFSKIRSEFVKWKRILDSKAIKTEETLRDEVQEYVKTRRGKELPGFVNYRTFENIVKKHIAELHEPALKLLKDVTDIVHSSVDHIVNAHFSSFSPLMRAAKDPTEDFLHEQFQRAEEKIHSQFRMEKIVYSQDDLYSDQLTTAKNTLRGYGLQSPNVSADVREMAYHLTSYLTIACERLANQIPLIVQYHMLNQYISQLQNAMLGLIGKNSPGMLLCEDSGVARKRKDLKERLERLKSAGRVLSKFVHSA</sequence>
<proteinExistence type="evidence at transcript level"/>
<accession>Q800G5</accession>
<evidence type="ECO:0000250" key="1"/>
<evidence type="ECO:0000255" key="2"/>
<evidence type="ECO:0000255" key="3">
    <source>
        <dbReference type="PROSITE-ProRule" id="PRU00720"/>
    </source>
</evidence>
<evidence type="ECO:0000255" key="4">
    <source>
        <dbReference type="PROSITE-ProRule" id="PRU01055"/>
    </source>
</evidence>
<protein>
    <recommendedName>
        <fullName>Interferon-induced GTP-binding protein MxE</fullName>
    </recommendedName>
    <alternativeName>
        <fullName>IFN-inducible antiviral protein MxE</fullName>
    </alternativeName>
    <alternativeName>
        <fullName>Interferon-inducible MxE protein</fullName>
    </alternativeName>
</protein>
<gene>
    <name type="primary">mxe</name>
</gene>
<keyword id="KW-0963">Cytoplasm</keyword>
<keyword id="KW-0342">GTP-binding</keyword>
<keyword id="KW-0547">Nucleotide-binding</keyword>
<keyword id="KW-1185">Reference proteome</keyword>
<organism>
    <name type="scientific">Danio rerio</name>
    <name type="common">Zebrafish</name>
    <name type="synonym">Brachydanio rerio</name>
    <dbReference type="NCBI Taxonomy" id="7955"/>
    <lineage>
        <taxon>Eukaryota</taxon>
        <taxon>Metazoa</taxon>
        <taxon>Chordata</taxon>
        <taxon>Craniata</taxon>
        <taxon>Vertebrata</taxon>
        <taxon>Euteleostomi</taxon>
        <taxon>Actinopterygii</taxon>
        <taxon>Neopterygii</taxon>
        <taxon>Teleostei</taxon>
        <taxon>Ostariophysi</taxon>
        <taxon>Cypriniformes</taxon>
        <taxon>Danionidae</taxon>
        <taxon>Danioninae</taxon>
        <taxon>Danio</taxon>
    </lineage>
</organism>
<feature type="chain" id="PRO_0000292870" description="Interferon-induced GTP-binding protein MxE">
    <location>
        <begin position="1"/>
        <end position="625"/>
    </location>
</feature>
<feature type="domain" description="Dynamin-type G" evidence="4">
    <location>
        <begin position="40"/>
        <end position="313"/>
    </location>
</feature>
<feature type="domain" description="GED" evidence="3">
    <location>
        <begin position="536"/>
        <end position="625"/>
    </location>
</feature>
<feature type="region of interest" description="G1 motif" evidence="4">
    <location>
        <begin position="50"/>
        <end position="57"/>
    </location>
</feature>
<feature type="region of interest" description="G2 motif" evidence="4">
    <location>
        <begin position="75"/>
        <end position="77"/>
    </location>
</feature>
<feature type="region of interest" description="G3 motif" evidence="4">
    <location>
        <begin position="151"/>
        <end position="154"/>
    </location>
</feature>
<feature type="region of interest" description="G4 motif" evidence="4">
    <location>
        <begin position="220"/>
        <end position="223"/>
    </location>
</feature>
<feature type="region of interest" description="G5 motif" evidence="4">
    <location>
        <begin position="252"/>
        <end position="255"/>
    </location>
</feature>
<feature type="binding site" evidence="2">
    <location>
        <begin position="50"/>
        <end position="57"/>
    </location>
    <ligand>
        <name>GTP</name>
        <dbReference type="ChEBI" id="CHEBI:37565"/>
    </ligand>
</feature>
<feature type="binding site" evidence="2">
    <location>
        <begin position="151"/>
        <end position="155"/>
    </location>
    <ligand>
        <name>GTP</name>
        <dbReference type="ChEBI" id="CHEBI:37565"/>
    </ligand>
</feature>
<feature type="binding site" evidence="2">
    <location>
        <begin position="220"/>
        <end position="223"/>
    </location>
    <ligand>
        <name>GTP</name>
        <dbReference type="ChEBI" id="CHEBI:37565"/>
    </ligand>
</feature>
<name>MXE_DANRE</name>
<reference key="1">
    <citation type="journal article" date="2003" name="BMC Genomics">
        <title>Comparative genomic analysis reveals independent expansion of a lineage-specific gene family in vertebrates: the class II cytokine receptors and their ligands in mammals and fish.</title>
        <authorList>
            <person name="Lutfalla G."/>
            <person name="Roest Crollius H."/>
            <person name="Stange-Thomann N."/>
            <person name="Jaillon O."/>
            <person name="Mogensen K."/>
            <person name="Monneron D."/>
        </authorList>
    </citation>
    <scope>NUCLEOTIDE SEQUENCE [MRNA]</scope>
</reference>
<comment type="subcellular location">
    <subcellularLocation>
        <location evidence="1">Cytoplasm</location>
    </subcellularLocation>
</comment>
<comment type="induction">
    <text>By interferons.</text>
</comment>
<comment type="similarity">
    <text evidence="4">Belongs to the TRAFAC class dynamin-like GTPase superfamily. Dynamin/Fzo/YdjA family.</text>
</comment>